<sequence>MNNAGHGPTRRLRGLGVLAGVALLAALWLLWLLGSAPRGTPAPQPTITILVWHWPFTDQPPELPSDTCTRYGIARCHLSANRSLLASADAVVFHHRELQTRRSHLPLAQRPRGQPWVWASMESPSHTHGLSHLRGIFNWVLSYRRDSDIFVPYGRLEPHWGPSPPLPAKSRVAAWVVSNFQERQLRARLYRQLAPHLRVDVFGRANGRPLCASCLVPTVAQYRFYLSFENSQHRDYITEKFWRNALVAGTVPVVLGPPRATYEAFVPADAFVHVDDFGSARELAAFLTGMNESRYQRFFAWRDRLRVRLFTDWRERFCAICDRYPHLPRSQVYEDLEGWFQA</sequence>
<organism>
    <name type="scientific">Homo sapiens</name>
    <name type="common">Human</name>
    <dbReference type="NCBI Taxonomy" id="9606"/>
    <lineage>
        <taxon>Eukaryota</taxon>
        <taxon>Metazoa</taxon>
        <taxon>Chordata</taxon>
        <taxon>Craniata</taxon>
        <taxon>Vertebrata</taxon>
        <taxon>Euteleostomi</taxon>
        <taxon>Mammalia</taxon>
        <taxon>Eutheria</taxon>
        <taxon>Euarchontoglires</taxon>
        <taxon>Primates</taxon>
        <taxon>Haplorrhini</taxon>
        <taxon>Catarrhini</taxon>
        <taxon>Hominidae</taxon>
        <taxon>Homo</taxon>
    </lineage>
</organism>
<keyword id="KW-1015">Disulfide bond</keyword>
<keyword id="KW-0325">Glycoprotein</keyword>
<keyword id="KW-0328">Glycosyltransferase</keyword>
<keyword id="KW-0333">Golgi apparatus</keyword>
<keyword id="KW-0472">Membrane</keyword>
<keyword id="KW-1267">Proteomics identification</keyword>
<keyword id="KW-1185">Reference proteome</keyword>
<keyword id="KW-0735">Signal-anchor</keyword>
<keyword id="KW-0808">Transferase</keyword>
<keyword id="KW-0812">Transmembrane</keyword>
<keyword id="KW-1133">Transmembrane helix</keyword>
<comment type="function">
    <text evidence="2 3 4 7 8 9 10 11 13 15 16 17 18 19 20 21 22 23">Catalyzes the transfer of L-fucose, from a guanosine diphosphate-beta-L-fucose, to the N-acetyl glucosamine (GlcNAc) of a distal alpha2,3 sialylated lactosamine unit of a glycoprotein or a glycolipid-linked sialopolylactosamines chain through an alpha-1,3 glycosidic linkage and participates in the final fucosylation step in the biosynthesis of the sialyl Lewis X (sLe(x)), a carbohydrate involved in cell and matrix adhesion during leukocyte trafficking and fertilization (PubMed:11404359, PubMed:15632313, PubMed:15926890, PubMed:18402946, PubMed:18553500, PubMed:29593094, PubMed:8207002, PubMed:8666674, PubMed:8752218, PubMed:9299472, PubMed:9405391, PubMed:9461592, PubMed:9473504, PubMed:9499379). In vitro, also synthesizes sialyl-dimeric-Lex structures, from VIM-2 structures and both di-fucosylated and trifucosylated structures from mono-fucosylated precursors (PubMed:9499379). However does not catalyze alpha 1-3 fucosylation when an internal alpha 1-3 fucosylation is present in polylactosamine chain and the fucosylation rate of the internal GlcNAc residues is reduced once fucose has been added to the distal GlcNAc (PubMed:9473504, PubMed:9499379). Also catalyzes the transfer of a fucose from GDP-beta-fucose to the 6-sulfated a(2,3)sialylated substrate to produce 6-sulfo sLex mediating significant L-selectin-dependent cell adhesion (PubMed:10200296, PubMed:8752218). Through sialyl-Lewis(x) biosynthesis, can control SELE- and SELP-mediated cell adhesion with leukocytes and allows leukocytes tethering and rolling along the endothelial tissue thereby enabling the leukocytes to accumulate at a site of inflammation (PubMed:10386892, PubMed:29138114, PubMed:8666674, PubMed:9473504, PubMed:9834120). May enhance embryo implantation through sialyl Lewis X (sLeX)-mediated adhesion of embryo cells to endometrium (PubMed:18402946, PubMed:18553500). May affect insulin signaling by up-regulating the phosphorylation and expression of some signaling molecules involved in the insulin-signaling pathway through SLe(x) which is present on the glycans of the INSRR alpha subunit (PubMed:17229154).</text>
</comment>
<comment type="catalytic activity">
    <reaction evidence="4 7 8 14 15 16 17 18 20 22">
        <text>an N-acetyl-alpha-neuraminyl-(2-&gt;3)-beta-D-galactosyl-(1-&gt;4)-N-acetyl-beta-D-glucosaminyl derivative + GDP-beta-L-fucose = an alpha-Neu5Ac-(2-&gt;3)-beta-D-Gal-(1-&gt;4)-[alpha-L-Fuc-(1-&gt;3)]-beta-D-GlcNAc derivative + GDP + H(+)</text>
        <dbReference type="Rhea" id="RHEA:56076"/>
        <dbReference type="ChEBI" id="CHEBI:15378"/>
        <dbReference type="ChEBI" id="CHEBI:57273"/>
        <dbReference type="ChEBI" id="CHEBI:58189"/>
        <dbReference type="ChEBI" id="CHEBI:136545"/>
        <dbReference type="ChEBI" id="CHEBI:139509"/>
    </reaction>
    <physiologicalReaction direction="left-to-right" evidence="27 34">
        <dbReference type="Rhea" id="RHEA:56077"/>
    </physiologicalReaction>
</comment>
<comment type="catalytic activity">
    <reaction evidence="18">
        <text>a neolactoside IV(3)-alpha-NeuAc-nLc4Cer + GDP-beta-L-fucose = a neolactoside IV(3)-alpha-NeuNAc,III(3)-alpha-Fuc-nLc4Cer + GDP + H(+)</text>
        <dbReference type="Rhea" id="RHEA:48392"/>
        <dbReference type="ChEBI" id="CHEBI:15378"/>
        <dbReference type="ChEBI" id="CHEBI:57273"/>
        <dbReference type="ChEBI" id="CHEBI:58189"/>
        <dbReference type="ChEBI" id="CHEBI:90390"/>
        <dbReference type="ChEBI" id="CHEBI:90392"/>
    </reaction>
    <physiologicalReaction direction="left-to-right" evidence="30">
        <dbReference type="Rhea" id="RHEA:48393"/>
    </physiologicalReaction>
</comment>
<comment type="catalytic activity">
    <reaction evidence="18">
        <text>a neolactoside VI(3)-alpha-NeuNAc-nLc6Cer + GDP-beta-L-fucose = a neolactoside VI(3)-alpha-NeuAc,V(3)-alphaFuc-nLc6Cer + GDP + H(+)</text>
        <dbReference type="Rhea" id="RHEA:48356"/>
        <dbReference type="ChEBI" id="CHEBI:15378"/>
        <dbReference type="ChEBI" id="CHEBI:57273"/>
        <dbReference type="ChEBI" id="CHEBI:58189"/>
        <dbReference type="ChEBI" id="CHEBI:90336"/>
        <dbReference type="ChEBI" id="CHEBI:90339"/>
    </reaction>
    <physiologicalReaction direction="left-to-right" evidence="30">
        <dbReference type="Rhea" id="RHEA:48357"/>
    </physiologicalReaction>
</comment>
<comment type="catalytic activity">
    <reaction evidence="14 22">
        <text>an alpha-Neu5Ac-(2-&gt;3)-beta-D-Gal-(1-&gt;4)-beta-D-GlcNAc-(1-&gt;3)-beta-D-Gal-(1-&gt;4)-[alpha-L-Fuc-(1-&gt;3)]-beta-D-GlcNAc derivative + GDP-beta-L-fucose = an alpha-Neu5Ac-(2-&gt;3)-beta-D-Gal-(1-&gt;4)-[alpha-L-Fuc-(1-&gt;3)]-beta-D-GlcNAc-(1-&gt;3)-beta-D-Gal-(1-&gt;4)-[alpha-L-Fuc-(1-&gt;3)]-beta-D-GlcNAc derivative + GDP + H(+)</text>
        <dbReference type="Rhea" id="RHEA:52864"/>
        <dbReference type="ChEBI" id="CHEBI:15378"/>
        <dbReference type="ChEBI" id="CHEBI:57273"/>
        <dbReference type="ChEBI" id="CHEBI:58189"/>
        <dbReference type="ChEBI" id="CHEBI:145342"/>
        <dbReference type="ChEBI" id="CHEBI:145343"/>
    </reaction>
    <physiologicalReaction direction="left-to-right" evidence="14 34">
        <dbReference type="Rhea" id="RHEA:52865"/>
    </physiologicalReaction>
</comment>
<comment type="catalytic activity">
    <reaction evidence="17">
        <text>an alpha-Neu5Ac-(2-&gt;3)-beta-D-Gal-(1-&gt;4)-beta-D-GlcNAc6S derivative + GDP-beta-L-fucose = an alpha-Neu5Ac-(2-&gt;3)-beta-D-Gal-(1-&gt;4)-[alpha-L-Fuc-(1-&gt;3)]-beta-D-GlcNAc6S derivative + GDP + H(+)</text>
        <dbReference type="Rhea" id="RHEA:62004"/>
        <dbReference type="ChEBI" id="CHEBI:15378"/>
        <dbReference type="ChEBI" id="CHEBI:57273"/>
        <dbReference type="ChEBI" id="CHEBI:58189"/>
        <dbReference type="ChEBI" id="CHEBI:145344"/>
        <dbReference type="ChEBI" id="CHEBI:145345"/>
    </reaction>
    <physiologicalReaction direction="left-to-right" evidence="29">
        <dbReference type="Rhea" id="RHEA:62005"/>
    </physiologicalReaction>
</comment>
<comment type="catalytic activity">
    <reaction evidence="19">
        <text>alpha-Neu5Ac-(2-&gt;3)-beta-D-Gal-(1-&gt;4)-beta-D-GlcNAc-(1-&gt;3)-beta-D-Gal-(1-&gt;4)-D-Glc + GDP-beta-L-fucose = alpha-Neu5Ac-(2-&gt;3)-beta-D-Gal-(1-&gt;4)-[alpha-L-Fuc-(1-&gt;3)]-beta-D-GlcNAc-(1-&gt;3)-beta-D-Gal-(1-&gt;4)-D-Glc + GDP + H(+)</text>
        <dbReference type="Rhea" id="RHEA:62008"/>
        <dbReference type="ChEBI" id="CHEBI:15378"/>
        <dbReference type="ChEBI" id="CHEBI:57273"/>
        <dbReference type="ChEBI" id="CHEBI:58189"/>
        <dbReference type="ChEBI" id="CHEBI:145346"/>
        <dbReference type="ChEBI" id="CHEBI:145347"/>
    </reaction>
    <physiologicalReaction direction="left-to-right" evidence="31">
        <dbReference type="Rhea" id="RHEA:62009"/>
    </physiologicalReaction>
</comment>
<comment type="catalytic activity">
    <reaction evidence="21">
        <text>alpha-Neu5Ac-(2-&gt;3)-beta-D-Gal-(1-&gt;4)-beta-D-GlcNAc-(1-&gt;3)-beta-D-Gal-(1-&gt;4)-[alpha-L-Fuc-(1-&gt;3)]-beta-D-GlcNAc-(1-&gt;3)-beta-D-Gal-(1-&gt;4)-beta-D-GlcNAc + GDP-beta-L-fucose = alpha-Neu5Ac-(2-&gt;3)-beta-D-Gal-(1-&gt;4)-[alpha-L-Fuc-(1-&gt;3)]-beta-D-GlcNAc-(1-&gt;3)-beta-D-Gal-(1-&gt;4)-[alpha-L-Fuc-(1-&gt;3)]-beta-D-GlcNAc-(1-&gt;3)-beta-D-Gal-(1-&gt;4)-beta-D-GlcNAc + GDP + H(+)</text>
        <dbReference type="Rhea" id="RHEA:62060"/>
        <dbReference type="ChEBI" id="CHEBI:15378"/>
        <dbReference type="ChEBI" id="CHEBI:57273"/>
        <dbReference type="ChEBI" id="CHEBI:58189"/>
        <dbReference type="ChEBI" id="CHEBI:145400"/>
        <dbReference type="ChEBI" id="CHEBI:145401"/>
    </reaction>
    <physiologicalReaction direction="left-to-right" evidence="33">
        <dbReference type="Rhea" id="RHEA:62061"/>
    </physiologicalReaction>
</comment>
<comment type="catalytic activity">
    <reaction evidence="20 21">
        <text>alpha-Neu5Ac-(2-&gt;3)-beta-D-Gal-(1-&gt;4)-beta-D-GlcNAc-(1-&gt;3)-beta-D-Gal-(1-&gt;4)-beta-D-GlcNAc-(1-&gt;3)-beta-D-Gal-(1-&gt;4)-beta-D-GlcNAc + GDP-beta-L-fucose = alpha-Neu5Ac-(2-&gt;3)-beta-D-Gal-(1-&gt;4)-[alpha-L-Fuc-(1-&gt;3)]-beta-D-GlcNAc-(1-&gt;3)-beta-D-Gal-(1-&gt;4)-beta-D-GlcNAc-(1-&gt;3)-beta-D-Gal-(1-&gt;4)-beta-D-GlcNAc + GDP + H(+)</text>
        <dbReference type="Rhea" id="RHEA:62056"/>
        <dbReference type="ChEBI" id="CHEBI:15378"/>
        <dbReference type="ChEBI" id="CHEBI:57273"/>
        <dbReference type="ChEBI" id="CHEBI:58189"/>
        <dbReference type="ChEBI" id="CHEBI:145398"/>
        <dbReference type="ChEBI" id="CHEBI:145399"/>
    </reaction>
    <physiologicalReaction direction="left-to-right" evidence="32 33">
        <dbReference type="Rhea" id="RHEA:62057"/>
    </physiologicalReaction>
</comment>
<comment type="activity regulation">
    <text evidence="3 6 7 19 31">Inhibited by NaCl (Probable). Inhibited by GDP in a concentration dependent manner, with an IC(50) value of 93 uM (PubMed:15632313, PubMed:9405391). Also inhibited by GMP and GTP (PubMed:9405391). Inhibited by N-ethylmaleimide (Probable). Activated by poly(ethylene glycol) by enhancing the thermal stability of FUT7 (PubMed:9405391). Activated by Mn2+, Ca2+, and Mg2+ (PubMed:9405391). Both panosialin A and B inhibit activity with IC(50) values of 4.8 and 5.3 ug/ml, respectively (PubMed:10386892). Inhibited by gallic acid (GA) and (-)-epigallocatechin gallate (EGCG) in a time-dependent and irreversible manner with IC(50) values of 60 and 700 nM, respectively (PubMed:15081893).</text>
</comment>
<comment type="biophysicochemical properties">
    <kinetics>
        <KM evidence="4">5 uM for GDP-fucose</KM>
        <KM evidence="22">8 uM for GDP-fucose</KM>
        <KM evidence="22">1.6 mM for N-acetyl-alpha-neuraminyl-(2-&gt;3)-beta-D-galactosyl-(1-&gt;4)-N-acetyl-beta-D-glucosaminyl</KM>
        <KM evidence="19">16.4 uM for GDP-fucose</KM>
        <KM evidence="19">3.08 mM for alpha2,3-sialyl lacto-N-neotetraose</KM>
        <KM evidence="7">7.8 mM for alpha2-3 sialyl N-acetyllactosamine</KM>
        <KM evidence="7">21 uM for GDP-fucose</KM>
    </kinetics>
    <phDependence>
        <text evidence="19">Optimum pH is 7.5.</text>
    </phDependence>
    <temperatureDependence>
        <text evidence="19">Optimum temperature is 37 degrees Celsius.</text>
    </temperatureDependence>
</comment>
<comment type="pathway">
    <text evidence="28">Protein modification; protein glycosylation.</text>
</comment>
<comment type="interaction">
    <interactant intactId="EBI-12817667">
        <id>Q11130</id>
    </interactant>
    <interactant intactId="EBI-12019274">
        <id>Q4LDR2</id>
        <label>CTXN3</label>
    </interactant>
    <organismsDiffer>false</organismsDiffer>
    <experiments>3</experiments>
</comment>
<comment type="interaction">
    <interactant intactId="EBI-12817667">
        <id>Q11130</id>
    </interactant>
    <interactant intactId="EBI-3911467">
        <id>Q07325</id>
        <label>CXCL9</label>
    </interactant>
    <organismsDiffer>false</organismsDiffer>
    <experiments>3</experiments>
</comment>
<comment type="subcellular location">
    <subcellularLocation>
        <location>Golgi apparatus</location>
        <location>Golgi stack membrane</location>
        <topology>Single-pass type II membrane protein</topology>
    </subcellularLocation>
    <text>Membrane-bound form in trans cisternae of Golgi.</text>
</comment>
<comment type="tissue specificity">
    <text>Leukocytic/myeloid lineage cells.</text>
</comment>
<comment type="induction">
    <text evidence="12 13 16 24">By T-cell activation (PubMed:8666674). Up-regulated by LIF (PubMed:19455659). Induced by IL1B (PubMed:29138114). Induced at higher levels by interleukin 12 in activated T cells (PubMed:9858509). Down-regulated by IL4 (PubMed:9858509).</text>
</comment>
<comment type="PTM">
    <text evidence="7">N-glycosylated.</text>
</comment>
<comment type="similarity">
    <text evidence="26">Belongs to the glycosyltransferase 10 family.</text>
</comment>
<comment type="online information" name="Functional Glycomics Gateway - GTase">
    <link uri="http://www.functionalglycomics.org/glycomics/molecule/jsp/glycoEnzyme/viewGlycoEnzyme.jsp?gbpId=gt_hum_604"/>
    <text>Fucosyltransferase 7</text>
</comment>
<evidence type="ECO:0000255" key="1"/>
<evidence type="ECO:0000269" key="2">
    <source>
    </source>
</evidence>
<evidence type="ECO:0000269" key="3">
    <source>
    </source>
</evidence>
<evidence type="ECO:0000269" key="4">
    <source>
    </source>
</evidence>
<evidence type="ECO:0000269" key="5">
    <source>
    </source>
</evidence>
<evidence type="ECO:0000269" key="6">
    <source>
    </source>
</evidence>
<evidence type="ECO:0000269" key="7">
    <source>
    </source>
</evidence>
<evidence type="ECO:0000269" key="8">
    <source>
    </source>
</evidence>
<evidence type="ECO:0000269" key="9">
    <source>
    </source>
</evidence>
<evidence type="ECO:0000269" key="10">
    <source>
    </source>
</evidence>
<evidence type="ECO:0000269" key="11">
    <source>
    </source>
</evidence>
<evidence type="ECO:0000269" key="12">
    <source>
    </source>
</evidence>
<evidence type="ECO:0000269" key="13">
    <source>
    </source>
</evidence>
<evidence type="ECO:0000269" key="14">
    <source>
    </source>
</evidence>
<evidence type="ECO:0000269" key="15">
    <source>
    </source>
</evidence>
<evidence type="ECO:0000269" key="16">
    <source>
    </source>
</evidence>
<evidence type="ECO:0000269" key="17">
    <source>
    </source>
</evidence>
<evidence type="ECO:0000269" key="18">
    <source>
    </source>
</evidence>
<evidence type="ECO:0000269" key="19">
    <source>
    </source>
</evidence>
<evidence type="ECO:0000269" key="20">
    <source>
    </source>
</evidence>
<evidence type="ECO:0000269" key="21">
    <source>
    </source>
</evidence>
<evidence type="ECO:0000269" key="22">
    <source>
    </source>
</evidence>
<evidence type="ECO:0000269" key="23">
    <source>
    </source>
</evidence>
<evidence type="ECO:0000269" key="24">
    <source>
    </source>
</evidence>
<evidence type="ECO:0000303" key="25">
    <source>
    </source>
</evidence>
<evidence type="ECO:0000305" key="26"/>
<evidence type="ECO:0000305" key="27">
    <source>
    </source>
</evidence>
<evidence type="ECO:0000305" key="28">
    <source>
    </source>
</evidence>
<evidence type="ECO:0000305" key="29">
    <source>
    </source>
</evidence>
<evidence type="ECO:0000305" key="30">
    <source>
    </source>
</evidence>
<evidence type="ECO:0000305" key="31">
    <source>
    </source>
</evidence>
<evidence type="ECO:0000305" key="32">
    <source>
    </source>
</evidence>
<evidence type="ECO:0000305" key="33">
    <source>
    </source>
</evidence>
<evidence type="ECO:0000305" key="34">
    <source>
    </source>
</evidence>
<evidence type="ECO:0000312" key="35">
    <source>
        <dbReference type="HGNC" id="HGNC:4018"/>
    </source>
</evidence>
<accession>Q11130</accession>
<accession>B2R7U7</accession>
<accession>Q6DK54</accession>
<gene>
    <name evidence="35" type="primary">FUT7</name>
</gene>
<name>FUT7_HUMAN</name>
<feature type="chain" id="PRO_0000221113" description="Alpha-(1,3)-fucosyltransferase 7">
    <location>
        <begin position="1"/>
        <end position="342"/>
    </location>
</feature>
<feature type="topological domain" description="Cytoplasmic" evidence="1">
    <location>
        <begin position="1"/>
        <end position="14"/>
    </location>
</feature>
<feature type="transmembrane region" description="Helical; Signal-anchor for type II membrane protein" evidence="1">
    <location>
        <begin position="15"/>
        <end position="36"/>
    </location>
</feature>
<feature type="topological domain" description="Lumenal" evidence="1">
    <location>
        <begin position="37"/>
        <end position="342"/>
    </location>
</feature>
<feature type="glycosylation site" description="N-linked (GlcNAc...) asparagine" evidence="8">
    <location>
        <position position="81"/>
    </location>
</feature>
<feature type="glycosylation site" description="N-linked (GlcNAc...) asparagine" evidence="8">
    <location>
        <position position="291"/>
    </location>
</feature>
<feature type="disulfide bond" evidence="5">
    <location>
        <begin position="68"/>
        <end position="76"/>
    </location>
</feature>
<feature type="disulfide bond" evidence="5">
    <location>
        <begin position="211"/>
        <end position="214"/>
    </location>
</feature>
<feature type="disulfide bond" evidence="5">
    <location>
        <begin position="318"/>
        <end position="321"/>
    </location>
</feature>
<feature type="sequence variant" id="VAR_079131" description="Found in patients with ulcerative colitis; loss of alpha-(1,3)-fucosyltransferase activity; dbSNP:rs545570871." evidence="4">
    <original>R</original>
    <variation>Q</variation>
    <location>
        <position position="110"/>
    </location>
</feature>
<feature type="mutagenesis site" description="Impairs glycosylation. Impairs glycosylation; when associated with Q-291. Does not affect SELP and SELL binding on SELPLG. Does not affect SELP and SELL binding on SELPLG; when associated with Q-291. Abolishes alpha-(1,3)-fucosyltransferase activity. Abolishes alpha-(1,3)-fucosyltransferase activity; when associated with Q-291. Fails to synthetises sLe(x) antigens or to generate SELE binding. Fails to synthetises sLe(x) antigens or to generate SELE binding; when associated with Q-291. Does not affect sLe(x) antigens synthesis or SELE binding only in presence of SELPLG and GCNT1; when associated with Q-291." evidence="8">
    <original>N</original>
    <variation>Q</variation>
    <location>
        <position position="81"/>
    </location>
</feature>
<feature type="mutagenesis site" description="Slightly affects glycosylation. Impairs glycosylation; when associated with Q-81. Does not affect SELP and SELL binding on SELPLG. Does not affect SELP and SELL binding on SELPLG; when associated with Q-81. Abolishes alpha-(1,3)-fucosyltransferase activity. Abolishes alpha-(1,3)-fucosyltransferase activity; when associated with Q-81. Fails to synthetises sLe(x) antigens or to generate SELE binding. Fails to synthetises sLe(x) antigens or to generate SELE binding; when associated with Q-81. Does not affect sLe(x) antigens synthesis or SELE binding only in presence of SELPLG and GCNT1; when associated with Q-81." evidence="8">
    <original>N</original>
    <variation>Q</variation>
    <location>
        <position position="291"/>
    </location>
</feature>
<feature type="sequence conflict" description="In Ref. 1; AAA56869." evidence="26" ref="1">
    <original>GP</original>
    <variation>A</variation>
    <location>
        <begin position="161"/>
        <end position="162"/>
    </location>
</feature>
<feature type="sequence conflict" description="In Ref. 1; AAA56869." evidence="26" ref="1">
    <original>RL</original>
    <variation>SV</variation>
    <location>
        <begin position="304"/>
        <end position="305"/>
    </location>
</feature>
<protein>
    <recommendedName>
        <fullName evidence="26">Alpha-(1,3)-fucosyltransferase 7</fullName>
        <ecNumber evidence="4 7 8 15 16 17 18 22">2.4.1.-</ecNumber>
    </recommendedName>
    <alternativeName>
        <fullName>Fucosyltransferase 7</fullName>
    </alternativeName>
    <alternativeName>
        <fullName evidence="25">Fucosyltransferase VII</fullName>
        <shortName evidence="25">Fuc-TVII</shortName>
        <shortName>FucT-VII</shortName>
    </alternativeName>
    <alternativeName>
        <fullName>Galactoside 3-L-fucosyltransferase</fullName>
    </alternativeName>
    <alternativeName>
        <fullName>Selectin ligand synthase</fullName>
    </alternativeName>
</protein>
<reference key="1">
    <citation type="journal article" date="1994" name="J. Biol. Chem.">
        <title>Molecular cloning of a cDNA encoding a novel human leukocyte alpha-1,3-fucosyltransferase capable of synthesizing the sialyl Lewis x determinant.</title>
        <authorList>
            <person name="Natsuka S."/>
            <person name="Gersten K.M."/>
            <person name="Zenita K."/>
            <person name="Kannagi R."/>
            <person name="Lowe J.B."/>
        </authorList>
    </citation>
    <scope>NUCLEOTIDE SEQUENCE [MRNA]</scope>
    <scope>CATALYTIC ACTIVITY</scope>
    <scope>FUNCTION</scope>
</reference>
<reference key="2">
    <citation type="journal article" date="1994" name="J. Biol. Chem.">
        <title>Molecular cloning of a cDNA encoding a novel human leukocyte alpha-1,3-fucosyltransferase capable of synthesizing the sialyl Lewis x determinant.</title>
        <authorList>
            <person name="Natsuka S."/>
            <person name="Gersten K.M."/>
            <person name="Zenita K."/>
            <person name="Kannagi R."/>
            <person name="Lowe J.B."/>
        </authorList>
    </citation>
    <scope>SEQUENCE REVISION</scope>
</reference>
<reference key="3">
    <citation type="journal article" date="1994" name="J. Biol. Chem.">
        <title>Expression cloning of a novel alpha 1,3-fucosyltransferase that is involved in biosynthesis of the sialyl Lewis x carbohydrate determinants in leukocytes.</title>
        <authorList>
            <person name="Sasaki K."/>
            <person name="Kurata K."/>
            <person name="Funayama K."/>
            <person name="Nagata M."/>
            <person name="Watanabe E."/>
            <person name="Ohta S."/>
            <person name="Hanai N."/>
            <person name="Nishi T."/>
        </authorList>
    </citation>
    <scope>NUCLEOTIDE SEQUENCE [MRNA]</scope>
</reference>
<reference key="4">
    <citation type="submission" date="1998-03" db="EMBL/GenBank/DDBJ databases">
        <title>The human selectin-ligand synthase (hFuc-T VII) gene structure and characterization of the promoter.</title>
        <authorList>
            <person name="Hiraiwa N."/>
            <person name="Hiraiwa M."/>
            <person name="Kannagi R."/>
        </authorList>
    </citation>
    <scope>NUCLEOTIDE SEQUENCE [GENOMIC DNA]</scope>
</reference>
<reference key="5">
    <citation type="journal article" date="2004" name="Nat. Genet.">
        <title>Complete sequencing and characterization of 21,243 full-length human cDNAs.</title>
        <authorList>
            <person name="Ota T."/>
            <person name="Suzuki Y."/>
            <person name="Nishikawa T."/>
            <person name="Otsuki T."/>
            <person name="Sugiyama T."/>
            <person name="Irie R."/>
            <person name="Wakamatsu A."/>
            <person name="Hayashi K."/>
            <person name="Sato H."/>
            <person name="Nagai K."/>
            <person name="Kimura K."/>
            <person name="Makita H."/>
            <person name="Sekine M."/>
            <person name="Obayashi M."/>
            <person name="Nishi T."/>
            <person name="Shibahara T."/>
            <person name="Tanaka T."/>
            <person name="Ishii S."/>
            <person name="Yamamoto J."/>
            <person name="Saito K."/>
            <person name="Kawai Y."/>
            <person name="Isono Y."/>
            <person name="Nakamura Y."/>
            <person name="Nagahari K."/>
            <person name="Murakami K."/>
            <person name="Yasuda T."/>
            <person name="Iwayanagi T."/>
            <person name="Wagatsuma M."/>
            <person name="Shiratori A."/>
            <person name="Sudo H."/>
            <person name="Hosoiri T."/>
            <person name="Kaku Y."/>
            <person name="Kodaira H."/>
            <person name="Kondo H."/>
            <person name="Sugawara M."/>
            <person name="Takahashi M."/>
            <person name="Kanda K."/>
            <person name="Yokoi T."/>
            <person name="Furuya T."/>
            <person name="Kikkawa E."/>
            <person name="Omura Y."/>
            <person name="Abe K."/>
            <person name="Kamihara K."/>
            <person name="Katsuta N."/>
            <person name="Sato K."/>
            <person name="Tanikawa M."/>
            <person name="Yamazaki M."/>
            <person name="Ninomiya K."/>
            <person name="Ishibashi T."/>
            <person name="Yamashita H."/>
            <person name="Murakawa K."/>
            <person name="Fujimori K."/>
            <person name="Tanai H."/>
            <person name="Kimata M."/>
            <person name="Watanabe M."/>
            <person name="Hiraoka S."/>
            <person name="Chiba Y."/>
            <person name="Ishida S."/>
            <person name="Ono Y."/>
            <person name="Takiguchi S."/>
            <person name="Watanabe S."/>
            <person name="Yosida M."/>
            <person name="Hotuta T."/>
            <person name="Kusano J."/>
            <person name="Kanehori K."/>
            <person name="Takahashi-Fujii A."/>
            <person name="Hara H."/>
            <person name="Tanase T.-O."/>
            <person name="Nomura Y."/>
            <person name="Togiya S."/>
            <person name="Komai F."/>
            <person name="Hara R."/>
            <person name="Takeuchi K."/>
            <person name="Arita M."/>
            <person name="Imose N."/>
            <person name="Musashino K."/>
            <person name="Yuuki H."/>
            <person name="Oshima A."/>
            <person name="Sasaki N."/>
            <person name="Aotsuka S."/>
            <person name="Yoshikawa Y."/>
            <person name="Matsunawa H."/>
            <person name="Ichihara T."/>
            <person name="Shiohata N."/>
            <person name="Sano S."/>
            <person name="Moriya S."/>
            <person name="Momiyama H."/>
            <person name="Satoh N."/>
            <person name="Takami S."/>
            <person name="Terashima Y."/>
            <person name="Suzuki O."/>
            <person name="Nakagawa S."/>
            <person name="Senoh A."/>
            <person name="Mizoguchi H."/>
            <person name="Goto Y."/>
            <person name="Shimizu F."/>
            <person name="Wakebe H."/>
            <person name="Hishigaki H."/>
            <person name="Watanabe T."/>
            <person name="Sugiyama A."/>
            <person name="Takemoto M."/>
            <person name="Kawakami B."/>
            <person name="Yamazaki M."/>
            <person name="Watanabe K."/>
            <person name="Kumagai A."/>
            <person name="Itakura S."/>
            <person name="Fukuzumi Y."/>
            <person name="Fujimori Y."/>
            <person name="Komiyama M."/>
            <person name="Tashiro H."/>
            <person name="Tanigami A."/>
            <person name="Fujiwara T."/>
            <person name="Ono T."/>
            <person name="Yamada K."/>
            <person name="Fujii Y."/>
            <person name="Ozaki K."/>
            <person name="Hirao M."/>
            <person name="Ohmori Y."/>
            <person name="Kawabata A."/>
            <person name="Hikiji T."/>
            <person name="Kobatake N."/>
            <person name="Inagaki H."/>
            <person name="Ikema Y."/>
            <person name="Okamoto S."/>
            <person name="Okitani R."/>
            <person name="Kawakami T."/>
            <person name="Noguchi S."/>
            <person name="Itoh T."/>
            <person name="Shigeta K."/>
            <person name="Senba T."/>
            <person name="Matsumura K."/>
            <person name="Nakajima Y."/>
            <person name="Mizuno T."/>
            <person name="Morinaga M."/>
            <person name="Sasaki M."/>
            <person name="Togashi T."/>
            <person name="Oyama M."/>
            <person name="Hata H."/>
            <person name="Watanabe M."/>
            <person name="Komatsu T."/>
            <person name="Mizushima-Sugano J."/>
            <person name="Satoh T."/>
            <person name="Shirai Y."/>
            <person name="Takahashi Y."/>
            <person name="Nakagawa K."/>
            <person name="Okumura K."/>
            <person name="Nagase T."/>
            <person name="Nomura N."/>
            <person name="Kikuchi H."/>
            <person name="Masuho Y."/>
            <person name="Yamashita R."/>
            <person name="Nakai K."/>
            <person name="Yada T."/>
            <person name="Nakamura Y."/>
            <person name="Ohara O."/>
            <person name="Isogai T."/>
            <person name="Sugano S."/>
        </authorList>
    </citation>
    <scope>NUCLEOTIDE SEQUENCE [LARGE SCALE MRNA]</scope>
    <source>
        <tissue>Umbilical cord blood</tissue>
    </source>
</reference>
<reference key="6">
    <citation type="journal article" date="2004" name="Nature">
        <title>DNA sequence and analysis of human chromosome 9.</title>
        <authorList>
            <person name="Humphray S.J."/>
            <person name="Oliver K."/>
            <person name="Hunt A.R."/>
            <person name="Plumb R.W."/>
            <person name="Loveland J.E."/>
            <person name="Howe K.L."/>
            <person name="Andrews T.D."/>
            <person name="Searle S."/>
            <person name="Hunt S.E."/>
            <person name="Scott C.E."/>
            <person name="Jones M.C."/>
            <person name="Ainscough R."/>
            <person name="Almeida J.P."/>
            <person name="Ambrose K.D."/>
            <person name="Ashwell R.I.S."/>
            <person name="Babbage A.K."/>
            <person name="Babbage S."/>
            <person name="Bagguley C.L."/>
            <person name="Bailey J."/>
            <person name="Banerjee R."/>
            <person name="Barker D.J."/>
            <person name="Barlow K.F."/>
            <person name="Bates K."/>
            <person name="Beasley H."/>
            <person name="Beasley O."/>
            <person name="Bird C.P."/>
            <person name="Bray-Allen S."/>
            <person name="Brown A.J."/>
            <person name="Brown J.Y."/>
            <person name="Burford D."/>
            <person name="Burrill W."/>
            <person name="Burton J."/>
            <person name="Carder C."/>
            <person name="Carter N.P."/>
            <person name="Chapman J.C."/>
            <person name="Chen Y."/>
            <person name="Clarke G."/>
            <person name="Clark S.Y."/>
            <person name="Clee C.M."/>
            <person name="Clegg S."/>
            <person name="Collier R.E."/>
            <person name="Corby N."/>
            <person name="Crosier M."/>
            <person name="Cummings A.T."/>
            <person name="Davies J."/>
            <person name="Dhami P."/>
            <person name="Dunn M."/>
            <person name="Dutta I."/>
            <person name="Dyer L.W."/>
            <person name="Earthrowl M.E."/>
            <person name="Faulkner L."/>
            <person name="Fleming C.J."/>
            <person name="Frankish A."/>
            <person name="Frankland J.A."/>
            <person name="French L."/>
            <person name="Fricker D.G."/>
            <person name="Garner P."/>
            <person name="Garnett J."/>
            <person name="Ghori J."/>
            <person name="Gilbert J.G.R."/>
            <person name="Glison C."/>
            <person name="Grafham D.V."/>
            <person name="Gribble S."/>
            <person name="Griffiths C."/>
            <person name="Griffiths-Jones S."/>
            <person name="Grocock R."/>
            <person name="Guy J."/>
            <person name="Hall R.E."/>
            <person name="Hammond S."/>
            <person name="Harley J.L."/>
            <person name="Harrison E.S.I."/>
            <person name="Hart E.A."/>
            <person name="Heath P.D."/>
            <person name="Henderson C.D."/>
            <person name="Hopkins B.L."/>
            <person name="Howard P.J."/>
            <person name="Howden P.J."/>
            <person name="Huckle E."/>
            <person name="Johnson C."/>
            <person name="Johnson D."/>
            <person name="Joy A.A."/>
            <person name="Kay M."/>
            <person name="Keenan S."/>
            <person name="Kershaw J.K."/>
            <person name="Kimberley A.M."/>
            <person name="King A."/>
            <person name="Knights A."/>
            <person name="Laird G.K."/>
            <person name="Langford C."/>
            <person name="Lawlor S."/>
            <person name="Leongamornlert D.A."/>
            <person name="Leversha M."/>
            <person name="Lloyd C."/>
            <person name="Lloyd D.M."/>
            <person name="Lovell J."/>
            <person name="Martin S."/>
            <person name="Mashreghi-Mohammadi M."/>
            <person name="Matthews L."/>
            <person name="McLaren S."/>
            <person name="McLay K.E."/>
            <person name="McMurray A."/>
            <person name="Milne S."/>
            <person name="Nickerson T."/>
            <person name="Nisbett J."/>
            <person name="Nordsiek G."/>
            <person name="Pearce A.V."/>
            <person name="Peck A.I."/>
            <person name="Porter K.M."/>
            <person name="Pandian R."/>
            <person name="Pelan S."/>
            <person name="Phillimore B."/>
            <person name="Povey S."/>
            <person name="Ramsey Y."/>
            <person name="Rand V."/>
            <person name="Scharfe M."/>
            <person name="Sehra H.K."/>
            <person name="Shownkeen R."/>
            <person name="Sims S.K."/>
            <person name="Skuce C.D."/>
            <person name="Smith M."/>
            <person name="Steward C.A."/>
            <person name="Swarbreck D."/>
            <person name="Sycamore N."/>
            <person name="Tester J."/>
            <person name="Thorpe A."/>
            <person name="Tracey A."/>
            <person name="Tromans A."/>
            <person name="Thomas D.W."/>
            <person name="Wall M."/>
            <person name="Wallis J.M."/>
            <person name="West A.P."/>
            <person name="Whitehead S.L."/>
            <person name="Willey D.L."/>
            <person name="Williams S.A."/>
            <person name="Wilming L."/>
            <person name="Wray P.W."/>
            <person name="Young L."/>
            <person name="Ashurst J.L."/>
            <person name="Coulson A."/>
            <person name="Blocker H."/>
            <person name="Durbin R.M."/>
            <person name="Sulston J.E."/>
            <person name="Hubbard T."/>
            <person name="Jackson M.J."/>
            <person name="Bentley D.R."/>
            <person name="Beck S."/>
            <person name="Rogers J."/>
            <person name="Dunham I."/>
        </authorList>
    </citation>
    <scope>NUCLEOTIDE SEQUENCE [LARGE SCALE GENOMIC DNA]</scope>
</reference>
<reference key="7">
    <citation type="journal article" date="2004" name="Genome Res.">
        <title>The status, quality, and expansion of the NIH full-length cDNA project: the Mammalian Gene Collection (MGC).</title>
        <authorList>
            <consortium name="The MGC Project Team"/>
        </authorList>
    </citation>
    <scope>NUCLEOTIDE SEQUENCE [LARGE SCALE MRNA]</scope>
    <source>
        <tissue>Lung</tissue>
        <tissue>Mammary gland</tissue>
    </source>
</reference>
<reference key="8">
    <citation type="journal article" date="1996" name="Cell">
        <title>The alpha(1,3)fucosyltransferase Fuc-TVII controls leukocyte trafficking through an essential role in L-, E-, and P-selectin ligand biosynthesis.</title>
        <authorList>
            <person name="Maly P."/>
            <person name="Thall A."/>
            <person name="Petryniak B."/>
            <person name="Rogers C.E."/>
            <person name="Smith P.L."/>
            <person name="Marks R.M."/>
            <person name="Kelly R.J."/>
            <person name="Gersten K.M."/>
            <person name="Cheng G."/>
            <person name="Saunders T.L."/>
            <person name="Camper S.A."/>
            <person name="Camphausen R.T."/>
            <person name="Sullivan F.X."/>
            <person name="Isogai Y."/>
            <person name="Hindsgaul O."/>
            <person name="von Andrian U.H."/>
            <person name="Lowe J.B."/>
        </authorList>
    </citation>
    <scope>FUNCTION</scope>
    <scope>CATALYTIC ACTIVITY</scope>
</reference>
<reference key="9">
    <citation type="journal article" date="1996" name="J. Cell Biol.">
        <title>The fucosyltransferase FucT-VII regulates E-selectin ligand synthesis in human T cells.</title>
        <authorList>
            <person name="Knibbs R.N."/>
            <person name="Craig R.A."/>
            <person name="Natsuka S."/>
            <person name="Chang A."/>
            <person name="Cameron M."/>
            <person name="Lowe J.B."/>
            <person name="Stoolman L.M."/>
        </authorList>
    </citation>
    <scope>INDUCTION</scope>
    <scope>FUNCTION</scope>
    <scope>CATALYTIC ACTIVITY</scope>
</reference>
<reference key="10">
    <citation type="journal article" date="1997" name="Biochem. Biophys. Res. Commun.">
        <title>Fucosylation of complex glycosphingolipids by recombinant fucosyltransferase-VII.</title>
        <authorList>
            <person name="Stroud M.R."/>
            <person name="Holmes E.H."/>
        </authorList>
    </citation>
    <scope>CATALYTIC ACTIVITY</scope>
    <scope>FUNCTION</scope>
</reference>
<reference key="11">
    <citation type="journal article" date="1997" name="J. Biol. Chem.">
        <title>Enzymatic characterization of human alpha1,3-fucosyltransferase Fuc-TVII synthesized in a B cell lymphoma cell line.</title>
        <authorList>
            <person name="Shinoda K."/>
            <person name="Morishita Y."/>
            <person name="Sasaki K."/>
            <person name="Matsuda Y."/>
            <person name="Takahashi I."/>
            <person name="Nishi T."/>
        </authorList>
    </citation>
    <scope>BIOPHYSICOCHEMICAL PROPERTIES</scope>
    <scope>ACTIVITY REGULATION</scope>
    <scope>FUNCTION</scope>
    <scope>CATALYTIC ACTIVITY</scope>
</reference>
<reference key="12">
    <citation type="journal article" date="1998" name="Biochem. Biophys. Res. Commun.">
        <title>The alpha 1--&gt;3 fucosylation at the penultimate GlcNAc catalyzed by fucosyltransferase VII is blocked by internally fucosylated residue in sialosyl long-chain poly-LacNAc: enzymatic basis for expression of physiological E-selectin epitope.</title>
        <authorList>
            <person name="Handa K."/>
            <person name="Withers D.A."/>
            <person name="Hakomori S."/>
        </authorList>
    </citation>
    <scope>FUNCTION</scope>
    <scope>CATALYTIC ACTIVITY</scope>
</reference>
<reference key="13">
    <citation type="journal article" date="1998" name="Glycobiology">
        <title>Acceptor specificity of the human leukocyte alpha3 fucosyltransferase: role of FucT-VII in the generation of selectin ligands.</title>
        <authorList>
            <person name="Britten C.J."/>
            <person name="van den Eijnden D.H."/>
            <person name="McDowell W."/>
            <person name="Kelly V.A."/>
            <person name="Witham S.J."/>
            <person name="Edbrooke M.R."/>
            <person name="Bird M.I."/>
            <person name="de Vries T."/>
            <person name="Smithers N."/>
        </authorList>
    </citation>
    <scope>BIOPHYSICOCHEMICAL PROPERTIES</scope>
    <scope>CATALYTIC ACTIVITY</scope>
    <scope>FUNCTION</scope>
</reference>
<reference key="14">
    <citation type="journal article" date="1998" name="Glycoconj. J.">
        <title>Panosialins, inhibitors of an alpha1,3-fucosyltransferase Fuc-TVII, suppress the expression of selectin ligands on U937 cells.</title>
        <authorList>
            <person name="Shinoda K."/>
            <person name="Shitara K."/>
            <person name="Yoshihara Y."/>
            <person name="Kusano A."/>
            <person name="Uosaki Y."/>
            <person name="Ohta S."/>
            <person name="Hanai N."/>
            <person name="Takahashi I."/>
        </authorList>
    </citation>
    <scope>ACTIVITY REGULATION</scope>
    <scope>FUNCTION</scope>
</reference>
<reference key="15">
    <citation type="journal article" date="1998" name="J. Biol. Chem.">
        <title>Complementary acceptor and site specificities of Fuc-TIV and Fuc-TVII allow effective biosynthesis of sialyl-TriLex and related polylactosamines present on glycoprotein counterreceptors of selectins.</title>
        <authorList>
            <person name="Niemelae R."/>
            <person name="Natunen J."/>
            <person name="Majuri M.L."/>
            <person name="Maaheimo H."/>
            <person name="Helin J."/>
            <person name="Lowe J.B."/>
            <person name="Renkonen O."/>
            <person name="Renkonen R."/>
        </authorList>
    </citation>
    <scope>CATALYTIC ACTIVITY</scope>
    <scope>FUNCTION</scope>
</reference>
<reference key="16">
    <citation type="journal article" date="1998" name="J. Exp. Med.">
        <title>Interleukin 12 and interleukin 4 control T cell adhesion to endothelial selectins through opposite effects on alpha1, 3-fucosyltransferase VII gene expression.</title>
        <authorList>
            <person name="Wagers A.J."/>
            <person name="Waters C.M."/>
            <person name="Stoolman L.M."/>
            <person name="Kansas G.S."/>
        </authorList>
    </citation>
    <scope>INDUCTION</scope>
</reference>
<reference key="17">
    <citation type="journal article" date="1998" name="J. Immunol.">
        <title>Alpha(1,3)-fucosyltransferase VII-dependent synthesis of P- and E-selectin ligands on cultured T lymphoblasts.</title>
        <authorList>
            <person name="Knibbs R.N."/>
            <person name="Craig R.A."/>
            <person name="Maly P."/>
            <person name="Smith P.L."/>
            <person name="Wolber F.M."/>
            <person name="Faulkner N.E."/>
            <person name="Lowe J.B."/>
            <person name="Stoolman L.M."/>
        </authorList>
    </citation>
    <scope>FUNCTION</scope>
</reference>
<reference key="18">
    <citation type="journal article" date="1999" name="Proc. Natl. Acad. Sci. U.S.A.">
        <title>Reconstitution of functional L-selectin ligands on a cultured human endothelial cell line by cotransfection of alpha1--&gt;3 fucosyltransferase VII and newly cloned GlcNAcbeta:6-sulfotransferase cDNA.</title>
        <authorList>
            <person name="Kimura N."/>
            <person name="Mitsuoka C."/>
            <person name="Kanamori A."/>
            <person name="Hiraiwa N."/>
            <person name="Uchimura K."/>
            <person name="Muramatsu T."/>
            <person name="Tamatani T."/>
            <person name="Kansas G.S."/>
            <person name="Kannagi R."/>
        </authorList>
    </citation>
    <scope>FUNCTION</scope>
</reference>
<reference key="19">
    <citation type="journal article" date="2001" name="Glycobiology">
        <title>Neighboring cysteine residues in human fucosyltransferase VII are engaged in disulfide bridges, forming small loop structures.</title>
        <authorList>
            <person name="de Vries T."/>
            <person name="Yen T.Y."/>
            <person name="Joshi R.K."/>
            <person name="Storm J."/>
            <person name="van Den Eijnden D.H."/>
            <person name="Knegtel R.M.A."/>
            <person name="Bunschoten H."/>
            <person name="Joziasse D.H."/>
            <person name="Macher B.A."/>
        </authorList>
    </citation>
    <scope>DISULFIDE BONDS</scope>
</reference>
<reference key="20">
    <citation type="journal article" date="2004" name="Arch. Biochem. Biophys.">
        <title>Inhibition of fucosyltransferase VII by gallic acid and its derivatives.</title>
        <authorList>
            <person name="Niu X."/>
            <person name="Fan X."/>
            <person name="Sun J."/>
            <person name="Ting P."/>
            <person name="Narula S."/>
            <person name="Lundell D."/>
        </authorList>
    </citation>
    <scope>ACTIVITY REGULATION</scope>
</reference>
<reference key="21">
    <citation type="journal article" date="2004" name="J. Biochem.">
        <title>Development of a sensitive separation and quantification method for sialyl Lewis X and Lewis X involving anion-exchange chromatography: biochemical characterization of alpha1-3 fucosyltransferase-VII.</title>
        <authorList>
            <person name="Miyashiro M."/>
            <person name="Furuya S."/>
            <person name="Sugita T."/>
        </authorList>
    </citation>
    <scope>CATALYTIC ACTIVITY</scope>
    <scope>FUNCTION</scope>
    <scope>GLYCOSYLATION</scope>
    <scope>BIOPHYSICOCHEMICAL PROPERTIES</scope>
    <scope>ACTIVITY REGULATION</scope>
</reference>
<reference key="22">
    <citation type="journal article" date="2005" name="Biochem. J.">
        <title>N-glycans of core2 beta(1,6)-N-acetylglucosaminyltransferase-I (C2GnT-I) but not those of alpha(1,3)-fucosyltransferase-VII (FucT-VII) are required for the synthesis of functional P-selectin glycoprotein ligand-1 (PSGL-1): effects on P-, L- and E-selectin binding.</title>
        <authorList>
            <person name="Prorok-Hamon M."/>
            <person name="Notel F."/>
            <person name="Mathieu S."/>
            <person name="Langlet C."/>
            <person name="Fukuda M."/>
            <person name="El-Battari A."/>
        </authorList>
    </citation>
    <scope>GLYCOSYLATION AT ASN-81 AND ASN-291</scope>
    <scope>MUTAGENESIS OF ASN-81 AND ASN-291</scope>
    <scope>FUNCTION</scope>
    <scope>CATALYTIC ACTIVITY</scope>
</reference>
<reference key="23">
    <citation type="journal article" date="2007" name="FEBS J.">
        <title>Alpha 1,3-fucosyltransferase-VII regulates the signaling molecules of the insulin receptor pathway.</title>
        <authorList>
            <person name="Wang Q.Y."/>
            <person name="Zhang Y."/>
            <person name="Chen H.J."/>
            <person name="Shen Z.H."/>
            <person name="Chen H.L."/>
        </authorList>
    </citation>
    <scope>FUNCTION</scope>
</reference>
<reference key="24">
    <citation type="journal article" date="2008" name="IUBMB Life">
        <title>FUT7 antisense sequence inhibits the expression of FUT7/sLeX and adhesion between embryonic and uterine cells.</title>
        <authorList>
            <person name="Liu S."/>
            <person name="Zhang Y."/>
            <person name="Liu Y."/>
            <person name="Qin H."/>
            <person name="Wang X."/>
            <person name="Yan Q."/>
        </authorList>
    </citation>
    <scope>FUNCTION</scope>
</reference>
<reference key="25">
    <citation type="journal article" date="2009" name="Fertil. Steril.">
        <title>Overexpression of fucosyltransferase VII (FUT7) promotes embryo adhesion and implantation.</title>
        <authorList>
            <person name="Zhang Y."/>
            <person name="Liu S."/>
            <person name="Liu Y."/>
            <person name="Wang Z."/>
            <person name="Wang X."/>
            <person name="Yan Q."/>
        </authorList>
    </citation>
    <scope>FUNCTION</scope>
</reference>
<reference key="26">
    <citation type="journal article" date="2009" name="Mol. Reprod. Dev.">
        <title>Regulating effect of LIF on the expression of FuT7: Probe into the mechanism of sLe(x) in implantation.</title>
        <authorList>
            <person name="Zhang Q."/>
            <person name="Liu S."/>
            <person name="Zhu Z."/>
            <person name="Yan Q."/>
        </authorList>
    </citation>
    <scope>INDUCTION</scope>
</reference>
<reference key="27">
    <citation type="journal article" date="2018" name="J. Biol. Chem.">
        <title>Distinct human alpha(1,3)-fucosyltransferases drive Lewis-X/sialyl Lewis-X assembly in human cells.</title>
        <authorList>
            <person name="Mondal N."/>
            <person name="Dykstra B."/>
            <person name="Lee J."/>
            <person name="Ashline D.J."/>
            <person name="Reinhold V.N."/>
            <person name="Rossi D.J."/>
            <person name="Sackstein R."/>
        </authorList>
    </citation>
    <scope>FUNCTION</scope>
    <scope>CATALYTIC ACTIVITY</scope>
</reference>
<reference key="28">
    <citation type="journal article" date="2018" name="Life Sci.">
        <title>The alpha1,3-fucosyltransferase FUT7 regulates IL-1beta-induced monocyte-endothelial adhesion via fucosylation of endomucin.</title>
        <authorList>
            <person name="Zhang J."/>
            <person name="Ju N."/>
            <person name="Yang X."/>
            <person name="Chen L."/>
            <person name="Yu C."/>
        </authorList>
    </citation>
    <scope>INDUCTION</scope>
    <scope>FUNCTION</scope>
</reference>
<reference key="29">
    <citation type="journal article" date="2001" name="J. Biol. Chem.">
        <title>Identification of a missense mutation (G329A;Arg(110)--&gt; GLN) in the human FUT7 gene.</title>
        <authorList>
            <person name="Bengtson P."/>
            <person name="Larson C."/>
            <person name="Lundblad A."/>
            <person name="Larson G."/>
            <person name="Paahlsson P."/>
        </authorList>
    </citation>
    <scope>VARIANT GLN-110</scope>
    <scope>CATALYTIC ACTIVITY</scope>
    <scope>CHARACTERIZATION OF VARIANT GLN-110</scope>
    <scope>BIOPHYSICOCHEMICAL PROPERTIES</scope>
    <scope>FUNCTION</scope>
</reference>
<dbReference type="EC" id="2.4.1.-" evidence="4 7 8 15 16 17 18 22"/>
<dbReference type="EMBL" id="X78031">
    <property type="protein sequence ID" value="CAA54962.1"/>
    <property type="molecule type" value="mRNA"/>
</dbReference>
<dbReference type="EMBL" id="U11282">
    <property type="protein sequence ID" value="AAA20468.1"/>
    <property type="molecule type" value="mRNA"/>
</dbReference>
<dbReference type="EMBL" id="U08112">
    <property type="protein sequence ID" value="AAA56869.1"/>
    <property type="molecule type" value="mRNA"/>
</dbReference>
<dbReference type="EMBL" id="AB012668">
    <property type="protein sequence ID" value="BAA32819.1"/>
    <property type="molecule type" value="Genomic_DNA"/>
</dbReference>
<dbReference type="EMBL" id="AK313124">
    <property type="protein sequence ID" value="BAG35944.1"/>
    <property type="molecule type" value="mRNA"/>
</dbReference>
<dbReference type="EMBL" id="AL807752">
    <property type="status" value="NOT_ANNOTATED_CDS"/>
    <property type="molecule type" value="Genomic_DNA"/>
</dbReference>
<dbReference type="EMBL" id="BC074746">
    <property type="protein sequence ID" value="AAH74746.2"/>
    <property type="molecule type" value="mRNA"/>
</dbReference>
<dbReference type="EMBL" id="BC086312">
    <property type="protein sequence ID" value="AAH86312.1"/>
    <property type="molecule type" value="mRNA"/>
</dbReference>
<dbReference type="CCDS" id="CCDS7022.1"/>
<dbReference type="PIR" id="A54057">
    <property type="entry name" value="A54057"/>
</dbReference>
<dbReference type="RefSeq" id="NP_004470.1">
    <property type="nucleotide sequence ID" value="NM_004479.4"/>
</dbReference>
<dbReference type="SMR" id="Q11130"/>
<dbReference type="BioGRID" id="108805">
    <property type="interactions" value="8"/>
</dbReference>
<dbReference type="FunCoup" id="Q11130">
    <property type="interactions" value="479"/>
</dbReference>
<dbReference type="IntAct" id="Q11130">
    <property type="interactions" value="5"/>
</dbReference>
<dbReference type="STRING" id="9606.ENSP00000318142"/>
<dbReference type="BindingDB" id="Q11130"/>
<dbReference type="ChEMBL" id="CHEMBL3596077"/>
<dbReference type="SwissLipids" id="SLP:000001438"/>
<dbReference type="CAZy" id="GT10">
    <property type="family name" value="Glycosyltransferase Family 10"/>
</dbReference>
<dbReference type="GlyCosmos" id="Q11130">
    <property type="glycosylation" value="2 sites, No reported glycans"/>
</dbReference>
<dbReference type="GlyGen" id="Q11130">
    <property type="glycosylation" value="5 sites"/>
</dbReference>
<dbReference type="iPTMnet" id="Q11130"/>
<dbReference type="PhosphoSitePlus" id="Q11130"/>
<dbReference type="BioMuta" id="FUT7"/>
<dbReference type="MassIVE" id="Q11130"/>
<dbReference type="PaxDb" id="9606-ENSP00000318142"/>
<dbReference type="PeptideAtlas" id="Q11130"/>
<dbReference type="Antibodypedia" id="32341">
    <property type="antibodies" value="152 antibodies from 26 providers"/>
</dbReference>
<dbReference type="DNASU" id="2529"/>
<dbReference type="Ensembl" id="ENST00000314412.7">
    <property type="protein sequence ID" value="ENSP00000318142.6"/>
    <property type="gene ID" value="ENSG00000180549.8"/>
</dbReference>
<dbReference type="GeneID" id="2529"/>
<dbReference type="KEGG" id="hsa:2529"/>
<dbReference type="MANE-Select" id="ENST00000314412.7">
    <property type="protein sequence ID" value="ENSP00000318142.6"/>
    <property type="RefSeq nucleotide sequence ID" value="NM_004479.4"/>
    <property type="RefSeq protein sequence ID" value="NP_004470.1"/>
</dbReference>
<dbReference type="UCSC" id="uc004ckq.3">
    <property type="organism name" value="human"/>
</dbReference>
<dbReference type="AGR" id="HGNC:4018"/>
<dbReference type="CTD" id="2529"/>
<dbReference type="DisGeNET" id="2529"/>
<dbReference type="GeneCards" id="FUT7"/>
<dbReference type="HGNC" id="HGNC:4018">
    <property type="gene designation" value="FUT7"/>
</dbReference>
<dbReference type="HPA" id="ENSG00000180549">
    <property type="expression patterns" value="Group enriched (bone marrow, brain, lymphoid tissue)"/>
</dbReference>
<dbReference type="MIM" id="602030">
    <property type="type" value="gene"/>
</dbReference>
<dbReference type="neXtProt" id="NX_Q11130"/>
<dbReference type="OpenTargets" id="ENSG00000180549"/>
<dbReference type="PharmGKB" id="PA28434"/>
<dbReference type="VEuPathDB" id="HostDB:ENSG00000180549"/>
<dbReference type="eggNOG" id="KOG2619">
    <property type="taxonomic scope" value="Eukaryota"/>
</dbReference>
<dbReference type="GeneTree" id="ENSGT00940000161618"/>
<dbReference type="HOGENOM" id="CLU_032075_4_1_1"/>
<dbReference type="InParanoid" id="Q11130"/>
<dbReference type="OMA" id="PGQPWVW"/>
<dbReference type="OrthoDB" id="427096at2759"/>
<dbReference type="PAN-GO" id="Q11130">
    <property type="GO annotations" value="2 GO annotations based on evolutionary models"/>
</dbReference>
<dbReference type="PhylomeDB" id="Q11130"/>
<dbReference type="TreeFam" id="TF316348"/>
<dbReference type="BioCyc" id="MetaCyc:HS11506-MONOMER"/>
<dbReference type="BRENDA" id="2.4.1.152">
    <property type="organism ID" value="2681"/>
</dbReference>
<dbReference type="BRENDA" id="2.4.1.214">
    <property type="organism ID" value="2681"/>
</dbReference>
<dbReference type="BRENDA" id="2.4.1.65">
    <property type="organism ID" value="2681"/>
</dbReference>
<dbReference type="PathwayCommons" id="Q11130"/>
<dbReference type="Reactome" id="R-HSA-9037629">
    <property type="pathway name" value="Lewis blood group biosynthesis"/>
</dbReference>
<dbReference type="SABIO-RK" id="Q11130"/>
<dbReference type="SignaLink" id="Q11130"/>
<dbReference type="UniPathway" id="UPA00378"/>
<dbReference type="BioGRID-ORCS" id="2529">
    <property type="hits" value="10 hits in 1137 CRISPR screens"/>
</dbReference>
<dbReference type="GeneWiki" id="FUT7"/>
<dbReference type="GenomeRNAi" id="2529"/>
<dbReference type="Pharos" id="Q11130">
    <property type="development level" value="Tchem"/>
</dbReference>
<dbReference type="PRO" id="PR:Q11130"/>
<dbReference type="Proteomes" id="UP000005640">
    <property type="component" value="Chromosome 9"/>
</dbReference>
<dbReference type="RNAct" id="Q11130">
    <property type="molecule type" value="protein"/>
</dbReference>
<dbReference type="Bgee" id="ENSG00000180549">
    <property type="expression patterns" value="Expressed in olfactory bulb and 179 other cell types or tissues"/>
</dbReference>
<dbReference type="GO" id="GO:0005794">
    <property type="term" value="C:Golgi apparatus"/>
    <property type="evidence" value="ECO:0000314"/>
    <property type="project" value="HPA"/>
</dbReference>
<dbReference type="GO" id="GO:0032580">
    <property type="term" value="C:Golgi cisterna membrane"/>
    <property type="evidence" value="ECO:0007669"/>
    <property type="project" value="UniProtKB-SubCell"/>
</dbReference>
<dbReference type="GO" id="GO:0000139">
    <property type="term" value="C:Golgi membrane"/>
    <property type="evidence" value="ECO:0000304"/>
    <property type="project" value="Reactome"/>
</dbReference>
<dbReference type="GO" id="GO:0016020">
    <property type="term" value="C:membrane"/>
    <property type="evidence" value="ECO:0007005"/>
    <property type="project" value="UniProtKB"/>
</dbReference>
<dbReference type="GO" id="GO:0005802">
    <property type="term" value="C:trans-Golgi network"/>
    <property type="evidence" value="ECO:0000314"/>
    <property type="project" value="UniProtKB"/>
</dbReference>
<dbReference type="GO" id="GO:0017083">
    <property type="term" value="F:4-galactosyl-N-acetylglucosaminide 3-alpha-L-fucosyltransferase activity"/>
    <property type="evidence" value="ECO:0000314"/>
    <property type="project" value="UniProtKB"/>
</dbReference>
<dbReference type="GO" id="GO:0046920">
    <property type="term" value="F:alpha-(1-&gt;3)-fucosyltransferase activity"/>
    <property type="evidence" value="ECO:0000314"/>
    <property type="project" value="UniProtKB"/>
</dbReference>
<dbReference type="GO" id="GO:0008417">
    <property type="term" value="F:fucosyltransferase activity"/>
    <property type="evidence" value="ECO:0000314"/>
    <property type="project" value="UniProtKB"/>
</dbReference>
<dbReference type="GO" id="GO:0002361">
    <property type="term" value="P:CD4-positive, CD25-positive, alpha-beta regulatory T cell differentiation"/>
    <property type="evidence" value="ECO:0007669"/>
    <property type="project" value="Ensembl"/>
</dbReference>
<dbReference type="GO" id="GO:0006672">
    <property type="term" value="P:ceramide metabolic process"/>
    <property type="evidence" value="ECO:0000314"/>
    <property type="project" value="BHF-UCL"/>
</dbReference>
<dbReference type="GO" id="GO:0007566">
    <property type="term" value="P:embryo implantation"/>
    <property type="evidence" value="ECO:0000315"/>
    <property type="project" value="UniProtKB"/>
</dbReference>
<dbReference type="GO" id="GO:0036065">
    <property type="term" value="P:fucosylation"/>
    <property type="evidence" value="ECO:0000318"/>
    <property type="project" value="GO_Central"/>
</dbReference>
<dbReference type="GO" id="GO:0006954">
    <property type="term" value="P:inflammatory response"/>
    <property type="evidence" value="ECO:0000250"/>
    <property type="project" value="UniProtKB"/>
</dbReference>
<dbReference type="GO" id="GO:0042355">
    <property type="term" value="P:L-fucose catabolic process"/>
    <property type="evidence" value="ECO:0000303"/>
    <property type="project" value="UniProtKB"/>
</dbReference>
<dbReference type="GO" id="GO:0002522">
    <property type="term" value="P:leukocyte migration involved in immune response"/>
    <property type="evidence" value="ECO:0007669"/>
    <property type="project" value="Ensembl"/>
</dbReference>
<dbReference type="GO" id="GO:0002523">
    <property type="term" value="P:leukocyte migration involved in inflammatory response"/>
    <property type="evidence" value="ECO:0000250"/>
    <property type="project" value="UniProtKB"/>
</dbReference>
<dbReference type="GO" id="GO:0097022">
    <property type="term" value="P:lymphocyte migration into lymph node"/>
    <property type="evidence" value="ECO:0000250"/>
    <property type="project" value="UniProtKB"/>
</dbReference>
<dbReference type="GO" id="GO:0009312">
    <property type="term" value="P:oligosaccharide biosynthetic process"/>
    <property type="evidence" value="ECO:0000304"/>
    <property type="project" value="Reactome"/>
</dbReference>
<dbReference type="GO" id="GO:0045785">
    <property type="term" value="P:positive regulation of cell adhesion"/>
    <property type="evidence" value="ECO:0000315"/>
    <property type="project" value="UniProtKB"/>
</dbReference>
<dbReference type="GO" id="GO:0022409">
    <property type="term" value="P:positive regulation of cell-cell adhesion"/>
    <property type="evidence" value="ECO:0000315"/>
    <property type="project" value="UniProtKB"/>
</dbReference>
<dbReference type="GO" id="GO:1904996">
    <property type="term" value="P:positive regulation of leukocyte adhesion to vascular endothelial cell"/>
    <property type="evidence" value="ECO:0000315"/>
    <property type="project" value="UniProtKB"/>
</dbReference>
<dbReference type="GO" id="GO:1903238">
    <property type="term" value="P:positive regulation of leukocyte tethering or rolling"/>
    <property type="evidence" value="ECO:0000250"/>
    <property type="project" value="UniProtKB"/>
</dbReference>
<dbReference type="GO" id="GO:1902624">
    <property type="term" value="P:positive regulation of neutrophil migration"/>
    <property type="evidence" value="ECO:0000250"/>
    <property type="project" value="UniProtKB"/>
</dbReference>
<dbReference type="GO" id="GO:0006486">
    <property type="term" value="P:protein glycosylation"/>
    <property type="evidence" value="ECO:0000314"/>
    <property type="project" value="UniProtKB"/>
</dbReference>
<dbReference type="GO" id="GO:0060353">
    <property type="term" value="P:regulation of cell adhesion molecule production"/>
    <property type="evidence" value="ECO:0000315"/>
    <property type="project" value="UniProtKB"/>
</dbReference>
<dbReference type="GO" id="GO:0022407">
    <property type="term" value="P:regulation of cell-cell adhesion"/>
    <property type="evidence" value="ECO:0000315"/>
    <property type="project" value="UniProtKB"/>
</dbReference>
<dbReference type="GO" id="GO:0046626">
    <property type="term" value="P:regulation of insulin receptor signaling pathway"/>
    <property type="evidence" value="ECO:0000315"/>
    <property type="project" value="UniProtKB"/>
</dbReference>
<dbReference type="GO" id="GO:1903037">
    <property type="term" value="P:regulation of leukocyte cell-cell adhesion"/>
    <property type="evidence" value="ECO:0000315"/>
    <property type="project" value="UniProtKB"/>
</dbReference>
<dbReference type="GO" id="GO:1903236">
    <property type="term" value="P:regulation of leukocyte tethering or rolling"/>
    <property type="evidence" value="ECO:0000315"/>
    <property type="project" value="UniProtKB"/>
</dbReference>
<dbReference type="GO" id="GO:2000389">
    <property type="term" value="P:regulation of neutrophil extravasation"/>
    <property type="evidence" value="ECO:0007669"/>
    <property type="project" value="Ensembl"/>
</dbReference>
<dbReference type="GO" id="GO:0001807">
    <property type="term" value="P:regulation of type IV hypersensitivity"/>
    <property type="evidence" value="ECO:0000250"/>
    <property type="project" value="UniProtKB"/>
</dbReference>
<dbReference type="GO" id="GO:0072678">
    <property type="term" value="P:T cell migration"/>
    <property type="evidence" value="ECO:0007669"/>
    <property type="project" value="Ensembl"/>
</dbReference>
<dbReference type="FunFam" id="3.40.50.11660:FF:000001">
    <property type="entry name" value="alpha-(1,3)-fucosyltransferase 9"/>
    <property type="match status" value="1"/>
</dbReference>
<dbReference type="Gene3D" id="3.40.50.11660">
    <property type="entry name" value="Glycosyl transferase family 10, C-terminal domain"/>
    <property type="match status" value="1"/>
</dbReference>
<dbReference type="InterPro" id="IPR055270">
    <property type="entry name" value="Glyco_tran_10_C"/>
</dbReference>
<dbReference type="InterPro" id="IPR031481">
    <property type="entry name" value="Glyco_tran_10_N"/>
</dbReference>
<dbReference type="InterPro" id="IPR001503">
    <property type="entry name" value="Glyco_trans_10"/>
</dbReference>
<dbReference type="InterPro" id="IPR038577">
    <property type="entry name" value="GT10-like_C_sf"/>
</dbReference>
<dbReference type="PANTHER" id="PTHR11929">
    <property type="entry name" value="ALPHA- 1,3 -FUCOSYLTRANSFERASE"/>
    <property type="match status" value="1"/>
</dbReference>
<dbReference type="PANTHER" id="PTHR11929:SF12">
    <property type="entry name" value="ALPHA-(1,3)-FUCOSYLTRANSFERASE 7"/>
    <property type="match status" value="1"/>
</dbReference>
<dbReference type="Pfam" id="PF17039">
    <property type="entry name" value="Glyco_tran_10_N"/>
    <property type="match status" value="1"/>
</dbReference>
<dbReference type="Pfam" id="PF00852">
    <property type="entry name" value="Glyco_transf_10"/>
    <property type="match status" value="1"/>
</dbReference>
<dbReference type="SUPFAM" id="SSF53756">
    <property type="entry name" value="UDP-Glycosyltransferase/glycogen phosphorylase"/>
    <property type="match status" value="1"/>
</dbReference>
<proteinExistence type="evidence at protein level"/>